<protein>
    <recommendedName>
        <fullName>Insulin</fullName>
    </recommendedName>
    <component>
        <recommendedName>
            <fullName>Insulin B chain</fullName>
        </recommendedName>
    </component>
    <component>
        <recommendedName>
            <fullName>Insulin A chain</fullName>
        </recommendedName>
    </component>
</protein>
<feature type="peptide" id="PRO_0000015824" description="Insulin B chain">
    <location>
        <begin position="1"/>
        <end position="30"/>
    </location>
</feature>
<feature type="peptide" id="PRO_0000015825" description="Insulin A chain">
    <location>
        <begin position="31"/>
        <end position="51"/>
    </location>
</feature>
<feature type="disulfide bond" description="Interchain (between B and A chains)" evidence="1">
    <location>
        <begin position="7"/>
        <end position="37"/>
    </location>
</feature>
<feature type="disulfide bond" description="Interchain (between B and A chains)" evidence="1">
    <location>
        <begin position="19"/>
        <end position="50"/>
    </location>
</feature>
<feature type="disulfide bond" evidence="1">
    <location>
        <begin position="36"/>
        <end position="41"/>
    </location>
</feature>
<feature type="non-consecutive residues" evidence="2">
    <location>
        <begin position="30"/>
        <end position="31"/>
    </location>
</feature>
<sequence>FVNQHLCGSHLVEALYLVCGNDGFFYRPKAGIVDQCCTGVCSLYQLQNYCN</sequence>
<evidence type="ECO:0000250" key="1"/>
<evidence type="ECO:0000305" key="2"/>
<comment type="function">
    <text>Insulin decreases blood glucose concentration. It increases cell permeability to monosaccharides, amino acids and fatty acids. It accelerates glycolysis, the pentose phosphate cycle, and glycogen synthesis in liver.</text>
</comment>
<comment type="subunit">
    <text>Heterodimer of a B chain and an A chain linked by two disulfide bonds.</text>
</comment>
<comment type="subcellular location">
    <subcellularLocation>
        <location>Secreted</location>
    </subcellularLocation>
</comment>
<comment type="similarity">
    <text evidence="2">Belongs to the insulin family.</text>
</comment>
<dbReference type="PIR" id="A01594">
    <property type="entry name" value="INPQ"/>
</dbReference>
<dbReference type="SMR" id="P01328"/>
<dbReference type="GO" id="GO:0005615">
    <property type="term" value="C:extracellular space"/>
    <property type="evidence" value="ECO:0007669"/>
    <property type="project" value="TreeGrafter"/>
</dbReference>
<dbReference type="GO" id="GO:0005179">
    <property type="term" value="F:hormone activity"/>
    <property type="evidence" value="ECO:0007669"/>
    <property type="project" value="UniProtKB-KW"/>
</dbReference>
<dbReference type="GO" id="GO:1901701">
    <property type="term" value="P:cellular response to oxygen-containing compound"/>
    <property type="evidence" value="ECO:0007669"/>
    <property type="project" value="UniProtKB-ARBA"/>
</dbReference>
<dbReference type="GO" id="GO:0042593">
    <property type="term" value="P:glucose homeostasis"/>
    <property type="evidence" value="ECO:0007669"/>
    <property type="project" value="TreeGrafter"/>
</dbReference>
<dbReference type="GO" id="GO:0006006">
    <property type="term" value="P:glucose metabolic process"/>
    <property type="evidence" value="ECO:0007669"/>
    <property type="project" value="UniProtKB-KW"/>
</dbReference>
<dbReference type="GO" id="GO:0050714">
    <property type="term" value="P:positive regulation of protein secretion"/>
    <property type="evidence" value="ECO:0007669"/>
    <property type="project" value="TreeGrafter"/>
</dbReference>
<dbReference type="CDD" id="cd04367">
    <property type="entry name" value="IlGF_insulin_like"/>
    <property type="match status" value="1"/>
</dbReference>
<dbReference type="Gene3D" id="1.10.100.10">
    <property type="entry name" value="Insulin-like"/>
    <property type="match status" value="1"/>
</dbReference>
<dbReference type="InterPro" id="IPR004825">
    <property type="entry name" value="Insulin"/>
</dbReference>
<dbReference type="InterPro" id="IPR016179">
    <property type="entry name" value="Insulin-like"/>
</dbReference>
<dbReference type="InterPro" id="IPR036438">
    <property type="entry name" value="Insulin-like_sf"/>
</dbReference>
<dbReference type="InterPro" id="IPR022353">
    <property type="entry name" value="Insulin_CS"/>
</dbReference>
<dbReference type="InterPro" id="IPR022352">
    <property type="entry name" value="Insulin_family"/>
</dbReference>
<dbReference type="PANTHER" id="PTHR11454:SF9">
    <property type="entry name" value="INSULIN"/>
    <property type="match status" value="1"/>
</dbReference>
<dbReference type="PANTHER" id="PTHR11454">
    <property type="entry name" value="INSULIN/INSULIN GROWTH FACTOR"/>
    <property type="match status" value="1"/>
</dbReference>
<dbReference type="Pfam" id="PF00049">
    <property type="entry name" value="Insulin"/>
    <property type="match status" value="1"/>
</dbReference>
<dbReference type="PRINTS" id="PR00277">
    <property type="entry name" value="INSULIN"/>
</dbReference>
<dbReference type="PRINTS" id="PR00276">
    <property type="entry name" value="INSULINFAMLY"/>
</dbReference>
<dbReference type="SMART" id="SM00078">
    <property type="entry name" value="IlGF"/>
    <property type="match status" value="1"/>
</dbReference>
<dbReference type="SUPFAM" id="SSF56994">
    <property type="entry name" value="Insulin-like"/>
    <property type="match status" value="1"/>
</dbReference>
<dbReference type="PROSITE" id="PS00262">
    <property type="entry name" value="INSULIN"/>
    <property type="match status" value="1"/>
</dbReference>
<name>INS_HYSCR</name>
<reference key="1">
    <citation type="journal article" date="1980" name="Nature">
        <title>A monomeric insulin from the porcupine (Hystrix cristata), an Old World hystricomorph.</title>
        <authorList>
            <person name="Horuk R."/>
            <person name="Blundell T.L."/>
            <person name="Lazarus N.R."/>
            <person name="Neville R.W.J."/>
            <person name="Stone D."/>
            <person name="Wollmer A."/>
        </authorList>
    </citation>
    <scope>PROTEIN SEQUENCE</scope>
</reference>
<keyword id="KW-0119">Carbohydrate metabolism</keyword>
<keyword id="KW-0903">Direct protein sequencing</keyword>
<keyword id="KW-1015">Disulfide bond</keyword>
<keyword id="KW-0313">Glucose metabolism</keyword>
<keyword id="KW-0372">Hormone</keyword>
<keyword id="KW-0964">Secreted</keyword>
<accession>P01328</accession>
<proteinExistence type="evidence at protein level"/>
<organism>
    <name type="scientific">Hystrix cristata</name>
    <name type="common">North African crested porcupine</name>
    <dbReference type="NCBI Taxonomy" id="10137"/>
    <lineage>
        <taxon>Eukaryota</taxon>
        <taxon>Metazoa</taxon>
        <taxon>Chordata</taxon>
        <taxon>Craniata</taxon>
        <taxon>Vertebrata</taxon>
        <taxon>Euteleostomi</taxon>
        <taxon>Mammalia</taxon>
        <taxon>Eutheria</taxon>
        <taxon>Euarchontoglires</taxon>
        <taxon>Glires</taxon>
        <taxon>Rodentia</taxon>
        <taxon>Hystricomorpha</taxon>
        <taxon>Hystricidae</taxon>
        <taxon>Hystrix</taxon>
    </lineage>
</organism>
<gene>
    <name type="primary">INS</name>
</gene>